<reference key="1">
    <citation type="journal article" date="1996" name="Development">
        <title>The neurogenic genes egghead and brainiac define a novel signaling pathway essential for epithelial morphogenesis during Drosophila oogenesis.</title>
        <authorList>
            <person name="Goode S."/>
            <person name="Melnick M."/>
            <person name="Chou T.-B."/>
            <person name="Perrimon N."/>
        </authorList>
    </citation>
    <scope>NUCLEOTIDE SEQUENCE [GENOMIC DNA / MRNA]</scope>
</reference>
<reference key="2">
    <citation type="submission" date="2000-02" db="EMBL/GenBank/DDBJ databases">
        <title>Characterization of a viable egh allele.</title>
        <authorList>
            <person name="Simmerl E."/>
            <person name="Hollmann M."/>
            <person name="Lammermann U."/>
            <person name="Ruebsam R."/>
            <person name="Schaefer U."/>
            <person name="Buening J."/>
            <person name="Schaefer M.A."/>
        </authorList>
    </citation>
    <scope>NUCLEOTIDE SEQUENCE [GENOMIC DNA]</scope>
    <source>
        <strain>Oregon-R</strain>
    </source>
</reference>
<reference key="3">
    <citation type="journal article" date="2000" name="Science">
        <title>The genome sequence of Drosophila melanogaster.</title>
        <authorList>
            <person name="Adams M.D."/>
            <person name="Celniker S.E."/>
            <person name="Holt R.A."/>
            <person name="Evans C.A."/>
            <person name="Gocayne J.D."/>
            <person name="Amanatides P.G."/>
            <person name="Scherer S.E."/>
            <person name="Li P.W."/>
            <person name="Hoskins R.A."/>
            <person name="Galle R.F."/>
            <person name="George R.A."/>
            <person name="Lewis S.E."/>
            <person name="Richards S."/>
            <person name="Ashburner M."/>
            <person name="Henderson S.N."/>
            <person name="Sutton G.G."/>
            <person name="Wortman J.R."/>
            <person name="Yandell M.D."/>
            <person name="Zhang Q."/>
            <person name="Chen L.X."/>
            <person name="Brandon R.C."/>
            <person name="Rogers Y.-H.C."/>
            <person name="Blazej R.G."/>
            <person name="Champe M."/>
            <person name="Pfeiffer B.D."/>
            <person name="Wan K.H."/>
            <person name="Doyle C."/>
            <person name="Baxter E.G."/>
            <person name="Helt G."/>
            <person name="Nelson C.R."/>
            <person name="Miklos G.L.G."/>
            <person name="Abril J.F."/>
            <person name="Agbayani A."/>
            <person name="An H.-J."/>
            <person name="Andrews-Pfannkoch C."/>
            <person name="Baldwin D."/>
            <person name="Ballew R.M."/>
            <person name="Basu A."/>
            <person name="Baxendale J."/>
            <person name="Bayraktaroglu L."/>
            <person name="Beasley E.M."/>
            <person name="Beeson K.Y."/>
            <person name="Benos P.V."/>
            <person name="Berman B.P."/>
            <person name="Bhandari D."/>
            <person name="Bolshakov S."/>
            <person name="Borkova D."/>
            <person name="Botchan M.R."/>
            <person name="Bouck J."/>
            <person name="Brokstein P."/>
            <person name="Brottier P."/>
            <person name="Burtis K.C."/>
            <person name="Busam D.A."/>
            <person name="Butler H."/>
            <person name="Cadieu E."/>
            <person name="Center A."/>
            <person name="Chandra I."/>
            <person name="Cherry J.M."/>
            <person name="Cawley S."/>
            <person name="Dahlke C."/>
            <person name="Davenport L.B."/>
            <person name="Davies P."/>
            <person name="de Pablos B."/>
            <person name="Delcher A."/>
            <person name="Deng Z."/>
            <person name="Mays A.D."/>
            <person name="Dew I."/>
            <person name="Dietz S.M."/>
            <person name="Dodson K."/>
            <person name="Doup L.E."/>
            <person name="Downes M."/>
            <person name="Dugan-Rocha S."/>
            <person name="Dunkov B.C."/>
            <person name="Dunn P."/>
            <person name="Durbin K.J."/>
            <person name="Evangelista C.C."/>
            <person name="Ferraz C."/>
            <person name="Ferriera S."/>
            <person name="Fleischmann W."/>
            <person name="Fosler C."/>
            <person name="Gabrielian A.E."/>
            <person name="Garg N.S."/>
            <person name="Gelbart W.M."/>
            <person name="Glasser K."/>
            <person name="Glodek A."/>
            <person name="Gong F."/>
            <person name="Gorrell J.H."/>
            <person name="Gu Z."/>
            <person name="Guan P."/>
            <person name="Harris M."/>
            <person name="Harris N.L."/>
            <person name="Harvey D.A."/>
            <person name="Heiman T.J."/>
            <person name="Hernandez J.R."/>
            <person name="Houck J."/>
            <person name="Hostin D."/>
            <person name="Houston K.A."/>
            <person name="Howland T.J."/>
            <person name="Wei M.-H."/>
            <person name="Ibegwam C."/>
            <person name="Jalali M."/>
            <person name="Kalush F."/>
            <person name="Karpen G.H."/>
            <person name="Ke Z."/>
            <person name="Kennison J.A."/>
            <person name="Ketchum K.A."/>
            <person name="Kimmel B.E."/>
            <person name="Kodira C.D."/>
            <person name="Kraft C.L."/>
            <person name="Kravitz S."/>
            <person name="Kulp D."/>
            <person name="Lai Z."/>
            <person name="Lasko P."/>
            <person name="Lei Y."/>
            <person name="Levitsky A.A."/>
            <person name="Li J.H."/>
            <person name="Li Z."/>
            <person name="Liang Y."/>
            <person name="Lin X."/>
            <person name="Liu X."/>
            <person name="Mattei B."/>
            <person name="McIntosh T.C."/>
            <person name="McLeod M.P."/>
            <person name="McPherson D."/>
            <person name="Merkulov G."/>
            <person name="Milshina N.V."/>
            <person name="Mobarry C."/>
            <person name="Morris J."/>
            <person name="Moshrefi A."/>
            <person name="Mount S.M."/>
            <person name="Moy M."/>
            <person name="Murphy B."/>
            <person name="Murphy L."/>
            <person name="Muzny D.M."/>
            <person name="Nelson D.L."/>
            <person name="Nelson D.R."/>
            <person name="Nelson K.A."/>
            <person name="Nixon K."/>
            <person name="Nusskern D.R."/>
            <person name="Pacleb J.M."/>
            <person name="Palazzolo M."/>
            <person name="Pittman G.S."/>
            <person name="Pan S."/>
            <person name="Pollard J."/>
            <person name="Puri V."/>
            <person name="Reese M.G."/>
            <person name="Reinert K."/>
            <person name="Remington K."/>
            <person name="Saunders R.D.C."/>
            <person name="Scheeler F."/>
            <person name="Shen H."/>
            <person name="Shue B.C."/>
            <person name="Siden-Kiamos I."/>
            <person name="Simpson M."/>
            <person name="Skupski M.P."/>
            <person name="Smith T.J."/>
            <person name="Spier E."/>
            <person name="Spradling A.C."/>
            <person name="Stapleton M."/>
            <person name="Strong R."/>
            <person name="Sun E."/>
            <person name="Svirskas R."/>
            <person name="Tector C."/>
            <person name="Turner R."/>
            <person name="Venter E."/>
            <person name="Wang A.H."/>
            <person name="Wang X."/>
            <person name="Wang Z.-Y."/>
            <person name="Wassarman D.A."/>
            <person name="Weinstock G.M."/>
            <person name="Weissenbach J."/>
            <person name="Williams S.M."/>
            <person name="Woodage T."/>
            <person name="Worley K.C."/>
            <person name="Wu D."/>
            <person name="Yang S."/>
            <person name="Yao Q.A."/>
            <person name="Ye J."/>
            <person name="Yeh R.-F."/>
            <person name="Zaveri J.S."/>
            <person name="Zhan M."/>
            <person name="Zhang G."/>
            <person name="Zhao Q."/>
            <person name="Zheng L."/>
            <person name="Zheng X.H."/>
            <person name="Zhong F.N."/>
            <person name="Zhong W."/>
            <person name="Zhou X."/>
            <person name="Zhu S.C."/>
            <person name="Zhu X."/>
            <person name="Smith H.O."/>
            <person name="Gibbs R.A."/>
            <person name="Myers E.W."/>
            <person name="Rubin G.M."/>
            <person name="Venter J.C."/>
        </authorList>
    </citation>
    <scope>NUCLEOTIDE SEQUENCE [LARGE SCALE GENOMIC DNA]</scope>
    <source>
        <strain>Berkeley</strain>
    </source>
</reference>
<reference key="4">
    <citation type="journal article" date="2002" name="Genome Biol.">
        <title>Annotation of the Drosophila melanogaster euchromatic genome: a systematic review.</title>
        <authorList>
            <person name="Misra S."/>
            <person name="Crosby M.A."/>
            <person name="Mungall C.J."/>
            <person name="Matthews B.B."/>
            <person name="Campbell K.S."/>
            <person name="Hradecky P."/>
            <person name="Huang Y."/>
            <person name="Kaminker J.S."/>
            <person name="Millburn G.H."/>
            <person name="Prochnik S.E."/>
            <person name="Smith C.D."/>
            <person name="Tupy J.L."/>
            <person name="Whitfield E.J."/>
            <person name="Bayraktaroglu L."/>
            <person name="Berman B.P."/>
            <person name="Bettencourt B.R."/>
            <person name="Celniker S.E."/>
            <person name="de Grey A.D.N.J."/>
            <person name="Drysdale R.A."/>
            <person name="Harris N.L."/>
            <person name="Richter J."/>
            <person name="Russo S."/>
            <person name="Schroeder A.J."/>
            <person name="Shu S.Q."/>
            <person name="Stapleton M."/>
            <person name="Yamada C."/>
            <person name="Ashburner M."/>
            <person name="Gelbart W.M."/>
            <person name="Rubin G.M."/>
            <person name="Lewis S.E."/>
        </authorList>
    </citation>
    <scope>GENOME REANNOTATION</scope>
    <source>
        <strain>Berkeley</strain>
    </source>
</reference>
<reference key="5">
    <citation type="journal article" date="2000" name="Science">
        <title>From sequence to chromosome: the tip of the X chromosome of D. melanogaster.</title>
        <authorList>
            <person name="Benos P.V."/>
            <person name="Gatt M.K."/>
            <person name="Ashburner M."/>
            <person name="Murphy L."/>
            <person name="Harris D."/>
            <person name="Barrell B.G."/>
            <person name="Ferraz C."/>
            <person name="Vidal S."/>
            <person name="Brun C."/>
            <person name="Demailles J."/>
            <person name="Cadieu E."/>
            <person name="Dreano S."/>
            <person name="Gloux S."/>
            <person name="Lelaure V."/>
            <person name="Mottier S."/>
            <person name="Galibert F."/>
            <person name="Borkova D."/>
            <person name="Minana B."/>
            <person name="Kafatos F.C."/>
            <person name="Louis C."/>
            <person name="Siden-Kiamos I."/>
            <person name="Bolshakov S."/>
            <person name="Papagiannakis G."/>
            <person name="Spanos L."/>
            <person name="Cox S."/>
            <person name="Madueno E."/>
            <person name="de Pablos B."/>
            <person name="Modolell J."/>
            <person name="Peter A."/>
            <person name="Schoettler P."/>
            <person name="Werner M."/>
            <person name="Mourkioti F."/>
            <person name="Beinert N."/>
            <person name="Dowe G."/>
            <person name="Schaefer U."/>
            <person name="Jaeckle H."/>
            <person name="Bucheton A."/>
            <person name="Callister D.M."/>
            <person name="Campbell L.A."/>
            <person name="Darlamitsou A."/>
            <person name="Henderson N.S."/>
            <person name="McMillan P.J."/>
            <person name="Salles C."/>
            <person name="Tait E.A."/>
            <person name="Valenti P."/>
            <person name="Saunders R.D.C."/>
            <person name="Glover D.M."/>
        </authorList>
    </citation>
    <scope>NUCLEOTIDE SEQUENCE [LARGE SCALE GENOMIC DNA]</scope>
    <source>
        <strain>Oregon-R</strain>
    </source>
</reference>
<reference key="6">
    <citation type="journal article" date="2003" name="J. Biol. Chem.">
        <title>Drosophila egghead encodes a beta 1,4-mannosyltransferase predicted to form the immediate precursor glycosphingolipid substrate for brainiac.</title>
        <authorList>
            <person name="Wandall H.H."/>
            <person name="Pedersen J.W."/>
            <person name="Park C."/>
            <person name="Levery S.B."/>
            <person name="Pizette S."/>
            <person name="Cohen S.M."/>
            <person name="Schwientek T."/>
            <person name="Clausen H."/>
        </authorList>
    </citation>
    <scope>FUNCTION</scope>
</reference>
<dbReference type="EC" id="2.4.1.-"/>
<dbReference type="EMBL" id="U15602">
    <property type="protein sequence ID" value="AAB49734.1"/>
    <property type="molecule type" value="mRNA"/>
</dbReference>
<dbReference type="EMBL" id="U21218">
    <property type="protein sequence ID" value="AAB49735.1"/>
    <property type="molecule type" value="Genomic_DNA"/>
</dbReference>
<dbReference type="EMBL" id="AF233288">
    <property type="protein sequence ID" value="AAF43419.1"/>
    <property type="molecule type" value="Genomic_DNA"/>
</dbReference>
<dbReference type="EMBL" id="AE014298">
    <property type="protein sequence ID" value="AAF45792.1"/>
    <property type="molecule type" value="Genomic_DNA"/>
</dbReference>
<dbReference type="EMBL" id="AL138972">
    <property type="protein sequence ID" value="CAB72293.1"/>
    <property type="molecule type" value="Genomic_DNA"/>
</dbReference>
<dbReference type="RefSeq" id="NP_001284829.1">
    <property type="nucleotide sequence ID" value="NM_001297900.1"/>
</dbReference>
<dbReference type="RefSeq" id="NP_525052.1">
    <property type="nucleotide sequence ID" value="NM_080313.3"/>
</dbReference>
<dbReference type="RefSeq" id="NP_726818.1">
    <property type="nucleotide sequence ID" value="NM_166946.2"/>
</dbReference>
<dbReference type="BioGRID" id="57772">
    <property type="interactions" value="7"/>
</dbReference>
<dbReference type="DIP" id="DIP-24087N"/>
<dbReference type="FunCoup" id="O01346">
    <property type="interactions" value="323"/>
</dbReference>
<dbReference type="IntAct" id="O01346">
    <property type="interactions" value="2"/>
</dbReference>
<dbReference type="STRING" id="7227.FBpp0070423"/>
<dbReference type="CAZy" id="GT2">
    <property type="family name" value="Glycosyltransferase Family 2"/>
</dbReference>
<dbReference type="PaxDb" id="7227-FBpp0070423"/>
<dbReference type="DNASU" id="31239"/>
<dbReference type="EnsemblMetazoa" id="FBtr0070439">
    <property type="protein sequence ID" value="FBpp0070423"/>
    <property type="gene ID" value="FBgn0001404"/>
</dbReference>
<dbReference type="EnsemblMetazoa" id="FBtr0070440">
    <property type="protein sequence ID" value="FBpp0070424"/>
    <property type="gene ID" value="FBgn0001404"/>
</dbReference>
<dbReference type="EnsemblMetazoa" id="FBtr0340091">
    <property type="protein sequence ID" value="FBpp0309090"/>
    <property type="gene ID" value="FBgn0001404"/>
</dbReference>
<dbReference type="GeneID" id="31239"/>
<dbReference type="KEGG" id="dme:Dmel_CG9659"/>
<dbReference type="AGR" id="FB:FBgn0001404"/>
<dbReference type="CTD" id="31239"/>
<dbReference type="FlyBase" id="FBgn0001404">
    <property type="gene designation" value="egh"/>
</dbReference>
<dbReference type="VEuPathDB" id="VectorBase:FBgn0001404"/>
<dbReference type="eggNOG" id="ENOG502QTGI">
    <property type="taxonomic scope" value="Eukaryota"/>
</dbReference>
<dbReference type="GeneTree" id="ENSGT00520000061918"/>
<dbReference type="HOGENOM" id="CLU_044554_0_0_1"/>
<dbReference type="InParanoid" id="O01346"/>
<dbReference type="OMA" id="CIENIAV"/>
<dbReference type="OrthoDB" id="3971593at2759"/>
<dbReference type="PhylomeDB" id="O01346"/>
<dbReference type="BioGRID-ORCS" id="31239">
    <property type="hits" value="1 hit in 1 CRISPR screen"/>
</dbReference>
<dbReference type="GenomeRNAi" id="31239"/>
<dbReference type="PRO" id="PR:O01346"/>
<dbReference type="Proteomes" id="UP000000803">
    <property type="component" value="Chromosome X"/>
</dbReference>
<dbReference type="Bgee" id="FBgn0001404">
    <property type="expression patterns" value="Expressed in enterocyte of posterior adult midgut epithelium (Drosophila) in digestive tract and 291 other cell types or tissues"/>
</dbReference>
<dbReference type="ExpressionAtlas" id="O01346">
    <property type="expression patterns" value="baseline and differential"/>
</dbReference>
<dbReference type="GO" id="GO:0005737">
    <property type="term" value="C:cytoplasm"/>
    <property type="evidence" value="ECO:0000318"/>
    <property type="project" value="GO_Central"/>
</dbReference>
<dbReference type="GO" id="GO:0016020">
    <property type="term" value="C:membrane"/>
    <property type="evidence" value="ECO:0000303"/>
    <property type="project" value="UniProtKB"/>
</dbReference>
<dbReference type="GO" id="GO:0019187">
    <property type="term" value="F:beta-1,4-mannosyltransferase activity"/>
    <property type="evidence" value="ECO:0000314"/>
    <property type="project" value="UniProtKB"/>
</dbReference>
<dbReference type="GO" id="GO:0007411">
    <property type="term" value="P:axon guidance"/>
    <property type="evidence" value="ECO:0000315"/>
    <property type="project" value="FlyBase"/>
</dbReference>
<dbReference type="GO" id="GO:0007298">
    <property type="term" value="P:border follicle cell migration"/>
    <property type="evidence" value="ECO:0000315"/>
    <property type="project" value="FlyBase"/>
</dbReference>
<dbReference type="GO" id="GO:0045165">
    <property type="term" value="P:cell fate commitment"/>
    <property type="evidence" value="ECO:0000315"/>
    <property type="project" value="UniProtKB"/>
</dbReference>
<dbReference type="GO" id="GO:0030707">
    <property type="term" value="P:follicle cell of egg chamber development"/>
    <property type="evidence" value="ECO:0000315"/>
    <property type="project" value="FlyBase"/>
</dbReference>
<dbReference type="GO" id="GO:0007299">
    <property type="term" value="P:follicle cell of egg chamber-cell adhesion"/>
    <property type="evidence" value="ECO:0000315"/>
    <property type="project" value="UniProtKB"/>
</dbReference>
<dbReference type="GO" id="GO:0007281">
    <property type="term" value="P:germ cell development"/>
    <property type="evidence" value="ECO:0000315"/>
    <property type="project" value="FlyBase"/>
</dbReference>
<dbReference type="GO" id="GO:0007293">
    <property type="term" value="P:germarium-derived egg chamber formation"/>
    <property type="evidence" value="ECO:0000315"/>
    <property type="project" value="FlyBase"/>
</dbReference>
<dbReference type="GO" id="GO:0006688">
    <property type="term" value="P:glycosphingolipid biosynthetic process"/>
    <property type="evidence" value="ECO:0000314"/>
    <property type="project" value="UniProtKB"/>
</dbReference>
<dbReference type="GO" id="GO:0001744">
    <property type="term" value="P:insect visual primordium formation"/>
    <property type="evidence" value="ECO:0000315"/>
    <property type="project" value="FlyBase"/>
</dbReference>
<dbReference type="GO" id="GO:0042248">
    <property type="term" value="P:maintenance of polarity of follicular epithelium"/>
    <property type="evidence" value="ECO:0000315"/>
    <property type="project" value="FlyBase"/>
</dbReference>
<dbReference type="GO" id="GO:0008049">
    <property type="term" value="P:male courtship behavior"/>
    <property type="evidence" value="ECO:0000315"/>
    <property type="project" value="FlyBase"/>
</dbReference>
<dbReference type="GO" id="GO:0016333">
    <property type="term" value="P:morphogenesis of follicular epithelium"/>
    <property type="evidence" value="ECO:0000315"/>
    <property type="project" value="FlyBase"/>
</dbReference>
<dbReference type="GO" id="GO:0045434">
    <property type="term" value="P:negative regulation of female receptivity, post-mating"/>
    <property type="evidence" value="ECO:0000315"/>
    <property type="project" value="FlyBase"/>
</dbReference>
<dbReference type="GO" id="GO:0030720">
    <property type="term" value="P:oocyte localization involved in germarium-derived egg chamber formation"/>
    <property type="evidence" value="ECO:0000315"/>
    <property type="project" value="FlyBase"/>
</dbReference>
<dbReference type="GO" id="GO:0016325">
    <property type="term" value="P:oocyte microtubule cytoskeleton organization"/>
    <property type="evidence" value="ECO:0000315"/>
    <property type="project" value="FlyBase"/>
</dbReference>
<dbReference type="GO" id="GO:0048935">
    <property type="term" value="P:peripheral nervous system neuron development"/>
    <property type="evidence" value="ECO:0000315"/>
    <property type="project" value="FlyBase"/>
</dbReference>
<dbReference type="GO" id="GO:0046662">
    <property type="term" value="P:regulation of egg-laying behavior"/>
    <property type="evidence" value="ECO:0000315"/>
    <property type="project" value="FlyBase"/>
</dbReference>
<dbReference type="FunFam" id="3.90.550.10:FF:000175">
    <property type="entry name" value="Beta-1,4-mannosyltransferase bre-3"/>
    <property type="match status" value="1"/>
</dbReference>
<dbReference type="Gene3D" id="3.90.550.10">
    <property type="entry name" value="Spore Coat Polysaccharide Biosynthesis Protein SpsA, Chain A"/>
    <property type="match status" value="1"/>
</dbReference>
<dbReference type="InterPro" id="IPR027389">
    <property type="entry name" value="B_mannosylTrfase_Bre-3/Egh"/>
</dbReference>
<dbReference type="InterPro" id="IPR001173">
    <property type="entry name" value="Glyco_trans_2-like"/>
</dbReference>
<dbReference type="InterPro" id="IPR029044">
    <property type="entry name" value="Nucleotide-diphossugar_trans"/>
</dbReference>
<dbReference type="PANTHER" id="PTHR16779">
    <property type="entry name" value="BETA-1,4-MANNOSYLTRANSFERASE EGH"/>
    <property type="match status" value="1"/>
</dbReference>
<dbReference type="PANTHER" id="PTHR16779:SF1">
    <property type="entry name" value="BETA-1,4-MANNOSYLTRANSFERASE EGH"/>
    <property type="match status" value="1"/>
</dbReference>
<dbReference type="Pfam" id="PF13632">
    <property type="entry name" value="Glyco_trans_2_3"/>
    <property type="match status" value="1"/>
</dbReference>
<dbReference type="SUPFAM" id="SSF53448">
    <property type="entry name" value="Nucleotide-diphospho-sugar transferases"/>
    <property type="match status" value="1"/>
</dbReference>
<proteinExistence type="evidence at transcript level"/>
<keyword id="KW-0217">Developmental protein</keyword>
<keyword id="KW-0328">Glycosyltransferase</keyword>
<keyword id="KW-0472">Membrane</keyword>
<keyword id="KW-1185">Reference proteome</keyword>
<keyword id="KW-0808">Transferase</keyword>
<keyword id="KW-0812">Transmembrane</keyword>
<keyword id="KW-1133">Transmembrane helix</keyword>
<evidence type="ECO:0000255" key="1"/>
<evidence type="ECO:0000269" key="2">
    <source>
    </source>
</evidence>
<evidence type="ECO:0000305" key="3"/>
<protein>
    <recommendedName>
        <fullName>Beta-1,4-mannosyltransferase egh</fullName>
        <ecNumber>2.4.1.-</ecNumber>
    </recommendedName>
    <alternativeName>
        <fullName>Protein egghead</fullName>
    </alternativeName>
    <alternativeName>
        <fullName>Protein zeste-white 4</fullName>
    </alternativeName>
</protein>
<organism>
    <name type="scientific">Drosophila melanogaster</name>
    <name type="common">Fruit fly</name>
    <dbReference type="NCBI Taxonomy" id="7227"/>
    <lineage>
        <taxon>Eukaryota</taxon>
        <taxon>Metazoa</taxon>
        <taxon>Ecdysozoa</taxon>
        <taxon>Arthropoda</taxon>
        <taxon>Hexapoda</taxon>
        <taxon>Insecta</taxon>
        <taxon>Pterygota</taxon>
        <taxon>Neoptera</taxon>
        <taxon>Endopterygota</taxon>
        <taxon>Diptera</taxon>
        <taxon>Brachycera</taxon>
        <taxon>Muscomorpha</taxon>
        <taxon>Ephydroidea</taxon>
        <taxon>Drosophilidae</taxon>
        <taxon>Drosophila</taxon>
        <taxon>Sophophora</taxon>
    </lineage>
</organism>
<name>EGH_DROME</name>
<accession>O01346</accession>
<accession>O01347</accession>
<accession>Q9V3B0</accession>
<comment type="function">
    <text evidence="2">Glycosyltransferase with a proposed role in glycosphingolipid biosynthesis. Neurogenic protein implicated in epithelial development. Critical component of a differential oocyte-follicle cell adhesive system.</text>
</comment>
<comment type="subcellular location">
    <subcellularLocation>
        <location evidence="3">Membrane</location>
        <topology evidence="3">Multi-pass membrane protein</topology>
    </subcellularLocation>
</comment>
<comment type="similarity">
    <text evidence="3">Belongs to the glycosyltransferase 2 family.</text>
</comment>
<sequence length="457" mass="51984">MNSTTKHLLHCTLLITVIVTFEVFSGGIKIDENSFTLVDPWTEYGQLATVLLYLLRFLTLLTLPQVLFNFCGLVFYNAFPEKVVLKGSPLLAPFICIRVVTRGDFPDLVKTNVLRNMNTCLDTGLENFLIEVVTDKAVNLSQHRRIREIVVPKEYKTRTGALFKSRALQYCLEDNVNVLNDSDWIVHLDEETLLTENSVRGIINFVLDGKHPFGQGLITYANENVVNWLTTLADSFRVSDDMGKLRLQFKLFHKPLFSWKGSYVVTQVSAERSVSFDNGIDGSVAEDCFFAMRAFSQGYTFNFIEGEMYEKSPFTLLDFLQQRKRWLQGILLVVHSKMIPFKHKLLLGISVYSWVTMPLSTSNIIFAALYPIPCPNLVDFVCAFIAAINIYMYVFGVIKSFSLYRFGLFRFLACVLGAVCTIPVNVVIENVAVIWGLVGKKHKFYVVQKDVRVLETV</sequence>
<feature type="chain" id="PRO_0000059274" description="Beta-1,4-mannosyltransferase egh">
    <location>
        <begin position="1"/>
        <end position="457"/>
    </location>
</feature>
<feature type="transmembrane region" description="Helical" evidence="1">
    <location>
        <begin position="8"/>
        <end position="28"/>
    </location>
</feature>
<feature type="transmembrane region" description="Helical" evidence="1">
    <location>
        <begin position="35"/>
        <end position="55"/>
    </location>
</feature>
<feature type="transmembrane region" description="Helical" evidence="1">
    <location>
        <begin position="57"/>
        <end position="77"/>
    </location>
</feature>
<feature type="transmembrane region" description="Helical" evidence="1">
    <location>
        <begin position="346"/>
        <end position="366"/>
    </location>
</feature>
<feature type="transmembrane region" description="Helical" evidence="1">
    <location>
        <begin position="378"/>
        <end position="398"/>
    </location>
</feature>
<feature type="transmembrane region" description="Helical" evidence="1">
    <location>
        <begin position="415"/>
        <end position="435"/>
    </location>
</feature>
<feature type="sequence conflict" description="In Ref. 1; AAB49735." evidence="3" ref="1">
    <original>S</original>
    <variation>R</variation>
    <location>
        <position position="262"/>
    </location>
</feature>
<gene>
    <name type="primary">egh</name>
    <name type="synonym">l(1)3Ae</name>
    <name type="synonym">zw4</name>
    <name type="ORF">CG9659</name>
</gene>